<accession>Q87S16</accession>
<protein>
    <recommendedName>
        <fullName evidence="1">4-hydroxy-3-methylbut-2-en-1-yl diphosphate synthase (flavodoxin)</fullName>
        <ecNumber evidence="1">1.17.7.3</ecNumber>
    </recommendedName>
    <alternativeName>
        <fullName evidence="1">1-hydroxy-2-methyl-2-(E)-butenyl 4-diphosphate synthase</fullName>
    </alternativeName>
</protein>
<comment type="function">
    <text evidence="1">Converts 2C-methyl-D-erythritol 2,4-cyclodiphosphate (ME-2,4cPP) into 1-hydroxy-2-methyl-2-(E)-butenyl 4-diphosphate.</text>
</comment>
<comment type="catalytic activity">
    <reaction evidence="1">
        <text>(2E)-4-hydroxy-3-methylbut-2-enyl diphosphate + oxidized [flavodoxin] + H2O + 2 H(+) = 2-C-methyl-D-erythritol 2,4-cyclic diphosphate + reduced [flavodoxin]</text>
        <dbReference type="Rhea" id="RHEA:43604"/>
        <dbReference type="Rhea" id="RHEA-COMP:10622"/>
        <dbReference type="Rhea" id="RHEA-COMP:10623"/>
        <dbReference type="ChEBI" id="CHEBI:15377"/>
        <dbReference type="ChEBI" id="CHEBI:15378"/>
        <dbReference type="ChEBI" id="CHEBI:57618"/>
        <dbReference type="ChEBI" id="CHEBI:58210"/>
        <dbReference type="ChEBI" id="CHEBI:58483"/>
        <dbReference type="ChEBI" id="CHEBI:128753"/>
        <dbReference type="EC" id="1.17.7.3"/>
    </reaction>
</comment>
<comment type="cofactor">
    <cofactor evidence="1">
        <name>[4Fe-4S] cluster</name>
        <dbReference type="ChEBI" id="CHEBI:49883"/>
    </cofactor>
    <text evidence="1">Binds 1 [4Fe-4S] cluster.</text>
</comment>
<comment type="pathway">
    <text evidence="1">Isoprenoid biosynthesis; isopentenyl diphosphate biosynthesis via DXP pathway; isopentenyl diphosphate from 1-deoxy-D-xylulose 5-phosphate: step 5/6.</text>
</comment>
<comment type="similarity">
    <text evidence="1">Belongs to the IspG family.</text>
</comment>
<gene>
    <name evidence="1" type="primary">ispG</name>
    <name type="ordered locus">VP0608</name>
</gene>
<proteinExistence type="inferred from homology"/>
<evidence type="ECO:0000255" key="1">
    <source>
        <dbReference type="HAMAP-Rule" id="MF_00159"/>
    </source>
</evidence>
<sequence length="372" mass="40689">MQHESPIIRRKSTRIYVGDVPIGDGAPIAVQSMTNTRTTDVEATVAQIRALEKVGADIVRVSVPTMEAAEAFKLIKQQVSVPLVADIHFDYRIALKVAEYGVDCLRINPGNIGNEERIRSVVDCARDKNIPIRIGVNGGSLEKDLQMKYGEPTPEALVESAMRHVDHLDRLNFDQFKVSVKASDVFLAVDSYRLLAKKIDQPLHLGITEAGGARAGAVKSAVGLGMLLSEGIGDTLRISLAADPVEEIKVGFDILKSLRIRSRGINFIACPSCSRQEFDVIGTVNALEQRLEDIITPMDVSIIGCVVNGPGEAEVSHLGLAGSNKKSAFYEDGKRQKERFDNNDLVNQLEAKIRAKASMMDSENRIEIKVQD</sequence>
<feature type="chain" id="PRO_0000190653" description="4-hydroxy-3-methylbut-2-en-1-yl diphosphate synthase (flavodoxin)">
    <location>
        <begin position="1"/>
        <end position="372"/>
    </location>
</feature>
<feature type="binding site" evidence="1">
    <location>
        <position position="270"/>
    </location>
    <ligand>
        <name>[4Fe-4S] cluster</name>
        <dbReference type="ChEBI" id="CHEBI:49883"/>
    </ligand>
</feature>
<feature type="binding site" evidence="1">
    <location>
        <position position="273"/>
    </location>
    <ligand>
        <name>[4Fe-4S] cluster</name>
        <dbReference type="ChEBI" id="CHEBI:49883"/>
    </ligand>
</feature>
<feature type="binding site" evidence="1">
    <location>
        <position position="305"/>
    </location>
    <ligand>
        <name>[4Fe-4S] cluster</name>
        <dbReference type="ChEBI" id="CHEBI:49883"/>
    </ligand>
</feature>
<feature type="binding site" evidence="1">
    <location>
        <position position="312"/>
    </location>
    <ligand>
        <name>[4Fe-4S] cluster</name>
        <dbReference type="ChEBI" id="CHEBI:49883"/>
    </ligand>
</feature>
<name>ISPG_VIBPA</name>
<reference key="1">
    <citation type="journal article" date="2003" name="Lancet">
        <title>Genome sequence of Vibrio parahaemolyticus: a pathogenic mechanism distinct from that of V. cholerae.</title>
        <authorList>
            <person name="Makino K."/>
            <person name="Oshima K."/>
            <person name="Kurokawa K."/>
            <person name="Yokoyama K."/>
            <person name="Uda T."/>
            <person name="Tagomori K."/>
            <person name="Iijima Y."/>
            <person name="Najima M."/>
            <person name="Nakano M."/>
            <person name="Yamashita A."/>
            <person name="Kubota Y."/>
            <person name="Kimura S."/>
            <person name="Yasunaga T."/>
            <person name="Honda T."/>
            <person name="Shinagawa H."/>
            <person name="Hattori M."/>
            <person name="Iida T."/>
        </authorList>
    </citation>
    <scope>NUCLEOTIDE SEQUENCE [LARGE SCALE GENOMIC DNA]</scope>
    <source>
        <strain>RIMD 2210633</strain>
    </source>
</reference>
<organism>
    <name type="scientific">Vibrio parahaemolyticus serotype O3:K6 (strain RIMD 2210633)</name>
    <dbReference type="NCBI Taxonomy" id="223926"/>
    <lineage>
        <taxon>Bacteria</taxon>
        <taxon>Pseudomonadati</taxon>
        <taxon>Pseudomonadota</taxon>
        <taxon>Gammaproteobacteria</taxon>
        <taxon>Vibrionales</taxon>
        <taxon>Vibrionaceae</taxon>
        <taxon>Vibrio</taxon>
    </lineage>
</organism>
<keyword id="KW-0004">4Fe-4S</keyword>
<keyword id="KW-0408">Iron</keyword>
<keyword id="KW-0411">Iron-sulfur</keyword>
<keyword id="KW-0414">Isoprene biosynthesis</keyword>
<keyword id="KW-0479">Metal-binding</keyword>
<keyword id="KW-0560">Oxidoreductase</keyword>
<dbReference type="EC" id="1.17.7.3" evidence="1"/>
<dbReference type="EMBL" id="BA000031">
    <property type="protein sequence ID" value="BAC58871.1"/>
    <property type="molecule type" value="Genomic_DNA"/>
</dbReference>
<dbReference type="RefSeq" id="NP_796987.1">
    <property type="nucleotide sequence ID" value="NC_004603.1"/>
</dbReference>
<dbReference type="RefSeq" id="WP_005460234.1">
    <property type="nucleotide sequence ID" value="NC_004603.1"/>
</dbReference>
<dbReference type="SMR" id="Q87S16"/>
<dbReference type="GeneID" id="1188083"/>
<dbReference type="KEGG" id="vpa:VP0608"/>
<dbReference type="PATRIC" id="fig|223926.6.peg.576"/>
<dbReference type="eggNOG" id="COG0821">
    <property type="taxonomic scope" value="Bacteria"/>
</dbReference>
<dbReference type="HOGENOM" id="CLU_042258_0_0_6"/>
<dbReference type="UniPathway" id="UPA00056">
    <property type="reaction ID" value="UER00096"/>
</dbReference>
<dbReference type="Proteomes" id="UP000002493">
    <property type="component" value="Chromosome 1"/>
</dbReference>
<dbReference type="GO" id="GO:0051539">
    <property type="term" value="F:4 iron, 4 sulfur cluster binding"/>
    <property type="evidence" value="ECO:0007669"/>
    <property type="project" value="UniProtKB-UniRule"/>
</dbReference>
<dbReference type="GO" id="GO:0046429">
    <property type="term" value="F:4-hydroxy-3-methylbut-2-en-1-yl diphosphate synthase activity (ferredoxin)"/>
    <property type="evidence" value="ECO:0007669"/>
    <property type="project" value="UniProtKB-UniRule"/>
</dbReference>
<dbReference type="GO" id="GO:0141197">
    <property type="term" value="F:4-hydroxy-3-methylbut-2-enyl-diphosphate synthase activity (flavodoxin)"/>
    <property type="evidence" value="ECO:0007669"/>
    <property type="project" value="UniProtKB-EC"/>
</dbReference>
<dbReference type="GO" id="GO:0005506">
    <property type="term" value="F:iron ion binding"/>
    <property type="evidence" value="ECO:0007669"/>
    <property type="project" value="InterPro"/>
</dbReference>
<dbReference type="GO" id="GO:0019288">
    <property type="term" value="P:isopentenyl diphosphate biosynthetic process, methylerythritol 4-phosphate pathway"/>
    <property type="evidence" value="ECO:0007669"/>
    <property type="project" value="UniProtKB-UniRule"/>
</dbReference>
<dbReference type="GO" id="GO:0016114">
    <property type="term" value="P:terpenoid biosynthetic process"/>
    <property type="evidence" value="ECO:0007669"/>
    <property type="project" value="InterPro"/>
</dbReference>
<dbReference type="FunFam" id="3.20.20.20:FF:000001">
    <property type="entry name" value="4-hydroxy-3-methylbut-2-en-1-yl diphosphate synthase (flavodoxin)"/>
    <property type="match status" value="1"/>
</dbReference>
<dbReference type="FunFam" id="3.30.413.10:FF:000002">
    <property type="entry name" value="4-hydroxy-3-methylbut-2-en-1-yl diphosphate synthase (flavodoxin)"/>
    <property type="match status" value="1"/>
</dbReference>
<dbReference type="Gene3D" id="3.20.20.20">
    <property type="entry name" value="Dihydropteroate synthase-like"/>
    <property type="match status" value="1"/>
</dbReference>
<dbReference type="Gene3D" id="3.30.413.10">
    <property type="entry name" value="Sulfite Reductase Hemoprotein, domain 1"/>
    <property type="match status" value="1"/>
</dbReference>
<dbReference type="HAMAP" id="MF_00159">
    <property type="entry name" value="IspG"/>
    <property type="match status" value="1"/>
</dbReference>
<dbReference type="InterPro" id="IPR011005">
    <property type="entry name" value="Dihydropteroate_synth-like_sf"/>
</dbReference>
<dbReference type="InterPro" id="IPR016425">
    <property type="entry name" value="IspG_bac"/>
</dbReference>
<dbReference type="InterPro" id="IPR004588">
    <property type="entry name" value="IspG_bac-typ"/>
</dbReference>
<dbReference type="InterPro" id="IPR045854">
    <property type="entry name" value="NO2/SO3_Rdtase_4Fe4S_sf"/>
</dbReference>
<dbReference type="NCBIfam" id="TIGR00612">
    <property type="entry name" value="ispG_gcpE"/>
    <property type="match status" value="1"/>
</dbReference>
<dbReference type="NCBIfam" id="NF001540">
    <property type="entry name" value="PRK00366.1"/>
    <property type="match status" value="1"/>
</dbReference>
<dbReference type="PANTHER" id="PTHR30454">
    <property type="entry name" value="4-HYDROXY-3-METHYLBUT-2-EN-1-YL DIPHOSPHATE SYNTHASE"/>
    <property type="match status" value="1"/>
</dbReference>
<dbReference type="PANTHER" id="PTHR30454:SF0">
    <property type="entry name" value="4-HYDROXY-3-METHYLBUT-2-EN-1-YL DIPHOSPHATE SYNTHASE (FERREDOXIN), CHLOROPLASTIC"/>
    <property type="match status" value="1"/>
</dbReference>
<dbReference type="Pfam" id="PF04551">
    <property type="entry name" value="GcpE"/>
    <property type="match status" value="1"/>
</dbReference>
<dbReference type="PIRSF" id="PIRSF004640">
    <property type="entry name" value="IspG"/>
    <property type="match status" value="1"/>
</dbReference>
<dbReference type="SUPFAM" id="SSF51717">
    <property type="entry name" value="Dihydropteroate synthetase-like"/>
    <property type="match status" value="1"/>
</dbReference>
<dbReference type="SUPFAM" id="SSF56014">
    <property type="entry name" value="Nitrite and sulphite reductase 4Fe-4S domain-like"/>
    <property type="match status" value="1"/>
</dbReference>